<comment type="function">
    <text evidence="1">Probable serine protease inhibitor.</text>
</comment>
<comment type="domain">
    <text evidence="1">The reactive center loop (RCL) extends out from the body of the protein and directs binding to the target protease. The protease cleaves the serpin at the reactive site within the RCL, establishing a covalent linkage between the carboxyl group of the serpin reactive site and the serine hydroxyl of the protease. The resulting inactive serpin-protease complex is highly stable (By similarity).</text>
</comment>
<comment type="similarity">
    <text evidence="3">Belongs to the serpin family.</text>
</comment>
<comment type="sequence caution" evidence="3">
    <conflict type="erroneous gene model prediction">
        <sequence resource="EMBL-CDS" id="AAX95869"/>
    </conflict>
</comment>
<comment type="sequence caution" evidence="3">
    <conflict type="erroneous gene model prediction">
        <sequence resource="EMBL-CDS" id="ABA92203"/>
    </conflict>
</comment>
<reference key="1">
    <citation type="journal article" date="2005" name="BMC Biol.">
        <title>The sequence of rice chromosomes 11 and 12, rich in disease resistance genes and recent gene duplications.</title>
        <authorList>
            <consortium name="The rice chromosomes 11 and 12 sequencing consortia"/>
        </authorList>
    </citation>
    <scope>NUCLEOTIDE SEQUENCE [LARGE SCALE GENOMIC DNA]</scope>
    <source>
        <strain>cv. Nipponbare</strain>
    </source>
</reference>
<reference key="2">
    <citation type="journal article" date="2005" name="Nature">
        <title>The map-based sequence of the rice genome.</title>
        <authorList>
            <consortium name="International rice genome sequencing project (IRGSP)"/>
        </authorList>
    </citation>
    <scope>NUCLEOTIDE SEQUENCE [LARGE SCALE GENOMIC DNA]</scope>
    <source>
        <strain>cv. Nipponbare</strain>
    </source>
</reference>
<reference key="3">
    <citation type="journal article" date="2013" name="Rice">
        <title>Improvement of the Oryza sativa Nipponbare reference genome using next generation sequence and optical map data.</title>
        <authorList>
            <person name="Kawahara Y."/>
            <person name="de la Bastide M."/>
            <person name="Hamilton J.P."/>
            <person name="Kanamori H."/>
            <person name="McCombie W.R."/>
            <person name="Ouyang S."/>
            <person name="Schwartz D.C."/>
            <person name="Tanaka T."/>
            <person name="Wu J."/>
            <person name="Zhou S."/>
            <person name="Childs K.L."/>
            <person name="Davidson R.M."/>
            <person name="Lin H."/>
            <person name="Quesada-Ocampo L."/>
            <person name="Vaillancourt B."/>
            <person name="Sakai H."/>
            <person name="Lee S.S."/>
            <person name="Kim J."/>
            <person name="Numa H."/>
            <person name="Itoh T."/>
            <person name="Buell C.R."/>
            <person name="Matsumoto T."/>
        </authorList>
    </citation>
    <scope>GENOME REANNOTATION</scope>
    <source>
        <strain>cv. Nipponbare</strain>
    </source>
</reference>
<reference key="4">
    <citation type="journal article" date="2008" name="Funct. Integr. Genomics">
        <title>Serpins in plants and green algae.</title>
        <authorList>
            <person name="Roberts T.H."/>
            <person name="Hejgaard J."/>
        </authorList>
    </citation>
    <scope>GENE FAMILY</scope>
    <scope>NOMENCLATURE</scope>
</reference>
<feature type="chain" id="PRO_0000334560" description="Putative serpin-Z8">
    <location>
        <begin position="1"/>
        <end position="422"/>
    </location>
</feature>
<feature type="region of interest" description="RCL">
    <location>
        <begin position="369"/>
        <end position="393"/>
    </location>
</feature>
<feature type="site" description="Reactive bond" evidence="2">
    <location>
        <begin position="383"/>
        <end position="384"/>
    </location>
</feature>
<organism>
    <name type="scientific">Oryza sativa subsp. japonica</name>
    <name type="common">Rice</name>
    <dbReference type="NCBI Taxonomy" id="39947"/>
    <lineage>
        <taxon>Eukaryota</taxon>
        <taxon>Viridiplantae</taxon>
        <taxon>Streptophyta</taxon>
        <taxon>Embryophyta</taxon>
        <taxon>Tracheophyta</taxon>
        <taxon>Spermatophyta</taxon>
        <taxon>Magnoliopsida</taxon>
        <taxon>Liliopsida</taxon>
        <taxon>Poales</taxon>
        <taxon>Poaceae</taxon>
        <taxon>BOP clade</taxon>
        <taxon>Oryzoideae</taxon>
        <taxon>Oryzeae</taxon>
        <taxon>Oryzinae</taxon>
        <taxon>Oryza</taxon>
        <taxon>Oryza sativa</taxon>
    </lineage>
</organism>
<accession>Q53P09</accession>
<evidence type="ECO:0000250" key="1"/>
<evidence type="ECO:0000255" key="2"/>
<evidence type="ECO:0000305" key="3"/>
<keyword id="KW-0646">Protease inhibitor</keyword>
<keyword id="KW-1185">Reference proteome</keyword>
<keyword id="KW-0722">Serine protease inhibitor</keyword>
<proteinExistence type="inferred from homology"/>
<name>SPZ8_ORYSJ</name>
<sequence length="422" mass="45235">MDDGEAARRHRHRAISGGLTALAVRLADRLGAASPGRNLAFSPLSVHAALSLAAAGAAGGTLDEILAVLGAASRDDLAAFVGRTAETALADRGPESLGPRVVFAPGVWCDAARPFKPAYRAAVAAEYNAEATVVDFKNKVEEARKQINAWARRATGKLITDVLPPRSVGPETAVVLGNAIYFKGKWDRPFNESDTERKPFYRHDGAAAAAAVADVPYMSSRSYQRVAVHDGFKVLKLRYRSPRLLRDKRKRGGGGDVGGEFTRYAMAIFLPDARDGLRGLVERMASRPGFLHEHMPAAWPVPVGEFRVPKFKVSCGGSVVGALEQLGLRLPFSPELADLSDMVEDDGSGWPLFVGDIQHKAVIEVNEEGTVAAAATMTRMLPSGVPPPPVDFVAEHPFAYFIVEEMSSAVVFAGHIVDPSME</sequence>
<dbReference type="EMBL" id="AC133005">
    <property type="protein sequence ID" value="AAX95869.1"/>
    <property type="status" value="ALT_SEQ"/>
    <property type="molecule type" value="Genomic_DNA"/>
</dbReference>
<dbReference type="EMBL" id="DP000010">
    <property type="protein sequence ID" value="ABA92203.1"/>
    <property type="status" value="ALT_SEQ"/>
    <property type="molecule type" value="Genomic_DNA"/>
</dbReference>
<dbReference type="EMBL" id="AP014967">
    <property type="status" value="NOT_ANNOTATED_CDS"/>
    <property type="molecule type" value="Genomic_DNA"/>
</dbReference>
<dbReference type="SMR" id="Q53P09"/>
<dbReference type="FunCoup" id="Q53P09">
    <property type="interactions" value="283"/>
</dbReference>
<dbReference type="STRING" id="39947.Q53P09"/>
<dbReference type="MEROPS" id="I04.081"/>
<dbReference type="PaxDb" id="39947-Q53P09"/>
<dbReference type="eggNOG" id="KOG2392">
    <property type="taxonomic scope" value="Eukaryota"/>
</dbReference>
<dbReference type="HOGENOM" id="CLU_023330_4_0_1"/>
<dbReference type="InParanoid" id="Q53P09"/>
<dbReference type="Proteomes" id="UP000000763">
    <property type="component" value="Chromosome 11"/>
</dbReference>
<dbReference type="Proteomes" id="UP000059680">
    <property type="component" value="Chromosome 11"/>
</dbReference>
<dbReference type="GO" id="GO:0005615">
    <property type="term" value="C:extracellular space"/>
    <property type="evidence" value="ECO:0000318"/>
    <property type="project" value="GO_Central"/>
</dbReference>
<dbReference type="GO" id="GO:0004867">
    <property type="term" value="F:serine-type endopeptidase inhibitor activity"/>
    <property type="evidence" value="ECO:0007669"/>
    <property type="project" value="UniProtKB-KW"/>
</dbReference>
<dbReference type="CDD" id="cd02043">
    <property type="entry name" value="serpinP_plants"/>
    <property type="match status" value="1"/>
</dbReference>
<dbReference type="Gene3D" id="2.30.39.10">
    <property type="entry name" value="Alpha-1-antitrypsin, domain 1"/>
    <property type="match status" value="1"/>
</dbReference>
<dbReference type="Gene3D" id="3.30.497.10">
    <property type="entry name" value="Antithrombin, subunit I, domain 2"/>
    <property type="match status" value="1"/>
</dbReference>
<dbReference type="InterPro" id="IPR023796">
    <property type="entry name" value="Serpin_dom"/>
</dbReference>
<dbReference type="InterPro" id="IPR000215">
    <property type="entry name" value="Serpin_fam"/>
</dbReference>
<dbReference type="InterPro" id="IPR036186">
    <property type="entry name" value="Serpin_sf"/>
</dbReference>
<dbReference type="InterPro" id="IPR042178">
    <property type="entry name" value="Serpin_sf_1"/>
</dbReference>
<dbReference type="InterPro" id="IPR042185">
    <property type="entry name" value="Serpin_sf_2"/>
</dbReference>
<dbReference type="PANTHER" id="PTHR11461">
    <property type="entry name" value="SERINE PROTEASE INHIBITOR, SERPIN"/>
    <property type="match status" value="1"/>
</dbReference>
<dbReference type="PANTHER" id="PTHR11461:SF209">
    <property type="entry name" value="SERPIN-Z8-RELATED"/>
    <property type="match status" value="1"/>
</dbReference>
<dbReference type="Pfam" id="PF00079">
    <property type="entry name" value="Serpin"/>
    <property type="match status" value="1"/>
</dbReference>
<dbReference type="SMART" id="SM00093">
    <property type="entry name" value="SERPIN"/>
    <property type="match status" value="1"/>
</dbReference>
<dbReference type="SUPFAM" id="SSF56574">
    <property type="entry name" value="Serpins"/>
    <property type="match status" value="1"/>
</dbReference>
<gene>
    <name type="ordered locus">Os11g0224800</name>
    <name type="ordered locus">LOC_Os11g11760</name>
</gene>
<protein>
    <recommendedName>
        <fullName>Putative serpin-Z8</fullName>
    </recommendedName>
    <alternativeName>
        <fullName>OrysaZ8</fullName>
    </alternativeName>
</protein>